<comment type="function">
    <text evidence="2 3">tRNA nucleotidyltransferase involved in the synthesis of the tRNA CCA terminus. In contrast to what is usually observed in eukaryotes for which one enzyme synthesizes the whole tRNA CCA terminus, in S.pombe, cca1 specifically adds two cytidine residues to a tRNA substrate lacking this sequence while cca2 specifically adds the terminal adenosine residue thereby completing the CCA sequence.</text>
</comment>
<comment type="catalytic activity">
    <reaction evidence="2">
        <text>a tRNA with a 3' CC end + ATP = a tRNA with a 3' CCA end + diphosphate</text>
        <dbReference type="Rhea" id="RHEA:60012"/>
        <dbReference type="Rhea" id="RHEA-COMP:10468"/>
        <dbReference type="Rhea" id="RHEA-COMP:15488"/>
        <dbReference type="ChEBI" id="CHEBI:30616"/>
        <dbReference type="ChEBI" id="CHEBI:33019"/>
        <dbReference type="ChEBI" id="CHEBI:83069"/>
        <dbReference type="ChEBI" id="CHEBI:83071"/>
    </reaction>
</comment>
<comment type="subcellular location">
    <subcellularLocation>
        <location evidence="1">Cytoplasm</location>
    </subcellularLocation>
</comment>
<comment type="domain">
    <text evidence="7">The B/A element (residues 122-124) is present in cca2 but not cca1 and is thought to position tRNA-NCC for terminal A addition.</text>
</comment>
<comment type="domain">
    <text evidence="7">The absence of a C-terminal alpha-helix in cca2 as compared to cca1 might allow for binding of the tRNA-NCC substrate, or prevents binding of the tRNA-N or tRNA-NC substrates.</text>
</comment>
<comment type="domain">
    <text evidence="7">The ERhxxExxxhh motif (residues 234-244) has been suggested to serve to distinguish between A-adding and CC-adding proteins as A-adding enzymes have a small amino acid in the first position while CC-adding enzymes have an E in the first position.</text>
</comment>
<comment type="similarity">
    <text evidence="6">Belongs to the tRNA nucleotidyltransferase/poly(A) polymerase family.</text>
</comment>
<proteinExistence type="evidence at protein level"/>
<organism>
    <name type="scientific">Schizosaccharomyces pombe (strain 972 / ATCC 24843)</name>
    <name type="common">Fission yeast</name>
    <dbReference type="NCBI Taxonomy" id="284812"/>
    <lineage>
        <taxon>Eukaryota</taxon>
        <taxon>Fungi</taxon>
        <taxon>Dikarya</taxon>
        <taxon>Ascomycota</taxon>
        <taxon>Taphrinomycotina</taxon>
        <taxon>Schizosaccharomycetes</taxon>
        <taxon>Schizosaccharomycetales</taxon>
        <taxon>Schizosaccharomycetaceae</taxon>
        <taxon>Schizosaccharomyces</taxon>
    </lineage>
</organism>
<protein>
    <recommendedName>
        <fullName evidence="5">tRNA nucleotidyltransferase cca2</fullName>
        <ecNumber evidence="2">2.7.7.-</ecNumber>
    </recommendedName>
    <alternativeName>
        <fullName evidence="4">A-adding enzyme cca2</fullName>
    </alternativeName>
    <alternativeName>
        <fullName evidence="5">tRNA adenylyltransferase cca2</fullName>
    </alternativeName>
</protein>
<name>CCA2_SCHPO</name>
<feature type="chain" id="PRO_0000316214" description="tRNA nucleotidyltransferase cca2">
    <location>
        <begin position="1"/>
        <end position="484"/>
    </location>
</feature>
<feature type="region of interest" description="Flexible loop" evidence="7">
    <location>
        <begin position="125"/>
        <end position="142"/>
    </location>
</feature>
<feature type="short sequence motif" description="B/A element" evidence="7">
    <location>
        <begin position="122"/>
        <end position="124"/>
    </location>
</feature>
<feature type="short sequence motif" description="ERhxxExxxhh motif" evidence="7">
    <location>
        <begin position="234"/>
        <end position="244"/>
    </location>
</feature>
<keyword id="KW-0067">ATP-binding</keyword>
<keyword id="KW-0963">Cytoplasm</keyword>
<keyword id="KW-0547">Nucleotide-binding</keyword>
<keyword id="KW-0548">Nucleotidyltransferase</keyword>
<keyword id="KW-1185">Reference proteome</keyword>
<keyword id="KW-0694">RNA-binding</keyword>
<keyword id="KW-0808">Transferase</keyword>
<keyword id="KW-0820">tRNA-binding</keyword>
<gene>
    <name evidence="5" type="primary">cca2</name>
    <name type="ORF">SPCC645.10</name>
</gene>
<accession>Q9Y7U9</accession>
<evidence type="ECO:0000269" key="1">
    <source>
    </source>
</evidence>
<evidence type="ECO:0000269" key="2">
    <source>
    </source>
</evidence>
<evidence type="ECO:0000269" key="3">
    <source>
    </source>
</evidence>
<evidence type="ECO:0000303" key="4">
    <source>
    </source>
</evidence>
<evidence type="ECO:0000303" key="5">
    <source>
    </source>
</evidence>
<evidence type="ECO:0000305" key="6"/>
<evidence type="ECO:0000305" key="7">
    <source>
    </source>
</evidence>
<sequence length="484" mass="54723">MYSRIVLNDVEKKVVNLLKKTADFIESKSSSSSSLEVRLAGGWVRDKLLGLSSDDLDVTLNKVTGVDFANSIFEYVHSLDSDSVIPYKDALGKLTVNPDQSKHLETATLSLFDLDIDFVGLRAESYDDKSRIPSVTPGTVETDALRRDFTVNTLFFNIRTEKIEDITKRGYKDLQTKVLVTPISPLQSFLEDPLRILRGIRFASRFEFTIDPSVVSAIQDPKVCKAFEKKVSKERVGEEIEKMLKGANAKLALQLLYSTNTYQFTFDTLPAEKEFQIPKALEATESLFQSLALTFPKLMKLSEDEKIGLWLYVALIPWSSQTVMVKKKQFYIPAIIAKDKLKLRSTYVNQLNQCCTFNPIFDELVNDTSTKNCSSIGSLIRQLNKSWEVVFLTSVIYSCCKTPAASVSNTFSSYKSLYDFIYDKNLQNAYNMKPLLDGKQIMKNVGVKPGPQLKETMDNMISWQFKHPEGSVEDCVAYLQSLKI</sequence>
<dbReference type="EC" id="2.7.7.-" evidence="2"/>
<dbReference type="EMBL" id="CU329672">
    <property type="protein sequence ID" value="CAB39906.1"/>
    <property type="molecule type" value="Genomic_DNA"/>
</dbReference>
<dbReference type="PIR" id="T41527">
    <property type="entry name" value="T41527"/>
</dbReference>
<dbReference type="RefSeq" id="NP_588119.1">
    <property type="nucleotide sequence ID" value="NM_001023109.2"/>
</dbReference>
<dbReference type="SMR" id="Q9Y7U9"/>
<dbReference type="FunCoup" id="Q9Y7U9">
    <property type="interactions" value="671"/>
</dbReference>
<dbReference type="STRING" id="284812.Q9Y7U9"/>
<dbReference type="PaxDb" id="4896-SPCC645.10.1"/>
<dbReference type="EnsemblFungi" id="SPCC645.10.1">
    <property type="protein sequence ID" value="SPCC645.10.1:pep"/>
    <property type="gene ID" value="SPCC645.10"/>
</dbReference>
<dbReference type="GeneID" id="2539578"/>
<dbReference type="KEGG" id="spo:2539578"/>
<dbReference type="PomBase" id="SPCC645.10">
    <property type="gene designation" value="cca2"/>
</dbReference>
<dbReference type="VEuPathDB" id="FungiDB:SPCC645.10"/>
<dbReference type="eggNOG" id="KOG2159">
    <property type="taxonomic scope" value="Eukaryota"/>
</dbReference>
<dbReference type="HOGENOM" id="CLU_019592_2_1_1"/>
<dbReference type="InParanoid" id="Q9Y7U9"/>
<dbReference type="OMA" id="NIHRATE"/>
<dbReference type="PhylomeDB" id="Q9Y7U9"/>
<dbReference type="PRO" id="PR:Q9Y7U9"/>
<dbReference type="Proteomes" id="UP000002485">
    <property type="component" value="Chromosome III"/>
</dbReference>
<dbReference type="GO" id="GO:0005829">
    <property type="term" value="C:cytosol"/>
    <property type="evidence" value="ECO:0000269"/>
    <property type="project" value="PomBase"/>
</dbReference>
<dbReference type="GO" id="GO:0005739">
    <property type="term" value="C:mitochondrion"/>
    <property type="evidence" value="ECO:0000269"/>
    <property type="project" value="PomBase"/>
</dbReference>
<dbReference type="GO" id="GO:0005524">
    <property type="term" value="F:ATP binding"/>
    <property type="evidence" value="ECO:0000314"/>
    <property type="project" value="PomBase"/>
</dbReference>
<dbReference type="GO" id="GO:0052929">
    <property type="term" value="F:ATP:3'-cytidine-cytidine-tRNA adenylyltransferase activity"/>
    <property type="evidence" value="ECO:0000314"/>
    <property type="project" value="PomBase"/>
</dbReference>
<dbReference type="GO" id="GO:0000049">
    <property type="term" value="F:tRNA binding"/>
    <property type="evidence" value="ECO:0000314"/>
    <property type="project" value="PomBase"/>
</dbReference>
<dbReference type="GO" id="GO:1990180">
    <property type="term" value="P:mitochondrial tRNA 3'-end processing"/>
    <property type="evidence" value="ECO:0000314"/>
    <property type="project" value="PomBase"/>
</dbReference>
<dbReference type="GO" id="GO:0001680">
    <property type="term" value="P:tRNA 3'-terminal CCA addition"/>
    <property type="evidence" value="ECO:0000314"/>
    <property type="project" value="PomBase"/>
</dbReference>
<dbReference type="CDD" id="cd05398">
    <property type="entry name" value="NT_ClassII-CCAase"/>
    <property type="match status" value="1"/>
</dbReference>
<dbReference type="FunFam" id="1.10.3090.10:FF:000013">
    <property type="entry name" value="PolyA polymerase family protein"/>
    <property type="match status" value="1"/>
</dbReference>
<dbReference type="FunFam" id="3.30.460.10:FF:000019">
    <property type="entry name" value="tRNA nucleotidyltransferase cca2"/>
    <property type="match status" value="1"/>
</dbReference>
<dbReference type="Gene3D" id="3.30.460.10">
    <property type="entry name" value="Beta Polymerase, domain 2"/>
    <property type="match status" value="1"/>
</dbReference>
<dbReference type="Gene3D" id="1.10.3090.10">
    <property type="entry name" value="cca-adding enzyme, domain 2"/>
    <property type="match status" value="1"/>
</dbReference>
<dbReference type="InterPro" id="IPR043519">
    <property type="entry name" value="NT_sf"/>
</dbReference>
<dbReference type="InterPro" id="IPR002646">
    <property type="entry name" value="PolA_pol_head_dom"/>
</dbReference>
<dbReference type="InterPro" id="IPR032828">
    <property type="entry name" value="PolyA_RNA-bd"/>
</dbReference>
<dbReference type="PANTHER" id="PTHR13734:SF9">
    <property type="entry name" value="TRNA NUCLEOTIDYLTRANSFERASE CCA2"/>
    <property type="match status" value="1"/>
</dbReference>
<dbReference type="PANTHER" id="PTHR13734">
    <property type="entry name" value="TRNA-NUCLEOTIDYLTRANSFERASE"/>
    <property type="match status" value="1"/>
</dbReference>
<dbReference type="Pfam" id="PF01743">
    <property type="entry name" value="PolyA_pol"/>
    <property type="match status" value="1"/>
</dbReference>
<dbReference type="Pfam" id="PF12627">
    <property type="entry name" value="PolyA_pol_RNAbd"/>
    <property type="match status" value="1"/>
</dbReference>
<dbReference type="SUPFAM" id="SSF81301">
    <property type="entry name" value="Nucleotidyltransferase"/>
    <property type="match status" value="1"/>
</dbReference>
<dbReference type="SUPFAM" id="SSF81891">
    <property type="entry name" value="Poly A polymerase C-terminal region-like"/>
    <property type="match status" value="1"/>
</dbReference>
<reference key="1">
    <citation type="journal article" date="2002" name="Nature">
        <title>The genome sequence of Schizosaccharomyces pombe.</title>
        <authorList>
            <person name="Wood V."/>
            <person name="Gwilliam R."/>
            <person name="Rajandream M.A."/>
            <person name="Lyne M.H."/>
            <person name="Lyne R."/>
            <person name="Stewart A."/>
            <person name="Sgouros J.G."/>
            <person name="Peat N."/>
            <person name="Hayles J."/>
            <person name="Baker S.G."/>
            <person name="Basham D."/>
            <person name="Bowman S."/>
            <person name="Brooks K."/>
            <person name="Brown D."/>
            <person name="Brown S."/>
            <person name="Chillingworth T."/>
            <person name="Churcher C.M."/>
            <person name="Collins M."/>
            <person name="Connor R."/>
            <person name="Cronin A."/>
            <person name="Davis P."/>
            <person name="Feltwell T."/>
            <person name="Fraser A."/>
            <person name="Gentles S."/>
            <person name="Goble A."/>
            <person name="Hamlin N."/>
            <person name="Harris D.E."/>
            <person name="Hidalgo J."/>
            <person name="Hodgson G."/>
            <person name="Holroyd S."/>
            <person name="Hornsby T."/>
            <person name="Howarth S."/>
            <person name="Huckle E.J."/>
            <person name="Hunt S."/>
            <person name="Jagels K."/>
            <person name="James K.D."/>
            <person name="Jones L."/>
            <person name="Jones M."/>
            <person name="Leather S."/>
            <person name="McDonald S."/>
            <person name="McLean J."/>
            <person name="Mooney P."/>
            <person name="Moule S."/>
            <person name="Mungall K.L."/>
            <person name="Murphy L.D."/>
            <person name="Niblett D."/>
            <person name="Odell C."/>
            <person name="Oliver K."/>
            <person name="O'Neil S."/>
            <person name="Pearson D."/>
            <person name="Quail M.A."/>
            <person name="Rabbinowitsch E."/>
            <person name="Rutherford K.M."/>
            <person name="Rutter S."/>
            <person name="Saunders D."/>
            <person name="Seeger K."/>
            <person name="Sharp S."/>
            <person name="Skelton J."/>
            <person name="Simmonds M.N."/>
            <person name="Squares R."/>
            <person name="Squares S."/>
            <person name="Stevens K."/>
            <person name="Taylor K."/>
            <person name="Taylor R.G."/>
            <person name="Tivey A."/>
            <person name="Walsh S.V."/>
            <person name="Warren T."/>
            <person name="Whitehead S."/>
            <person name="Woodward J.R."/>
            <person name="Volckaert G."/>
            <person name="Aert R."/>
            <person name="Robben J."/>
            <person name="Grymonprez B."/>
            <person name="Weltjens I."/>
            <person name="Vanstreels E."/>
            <person name="Rieger M."/>
            <person name="Schaefer M."/>
            <person name="Mueller-Auer S."/>
            <person name="Gabel C."/>
            <person name="Fuchs M."/>
            <person name="Duesterhoeft A."/>
            <person name="Fritzc C."/>
            <person name="Holzer E."/>
            <person name="Moestl D."/>
            <person name="Hilbert H."/>
            <person name="Borzym K."/>
            <person name="Langer I."/>
            <person name="Beck A."/>
            <person name="Lehrach H."/>
            <person name="Reinhardt R."/>
            <person name="Pohl T.M."/>
            <person name="Eger P."/>
            <person name="Zimmermann W."/>
            <person name="Wedler H."/>
            <person name="Wambutt R."/>
            <person name="Purnelle B."/>
            <person name="Goffeau A."/>
            <person name="Cadieu E."/>
            <person name="Dreano S."/>
            <person name="Gloux S."/>
            <person name="Lelaure V."/>
            <person name="Mottier S."/>
            <person name="Galibert F."/>
            <person name="Aves S.J."/>
            <person name="Xiang Z."/>
            <person name="Hunt C."/>
            <person name="Moore K."/>
            <person name="Hurst S.M."/>
            <person name="Lucas M."/>
            <person name="Rochet M."/>
            <person name="Gaillardin C."/>
            <person name="Tallada V.A."/>
            <person name="Garzon A."/>
            <person name="Thode G."/>
            <person name="Daga R.R."/>
            <person name="Cruzado L."/>
            <person name="Jimenez J."/>
            <person name="Sanchez M."/>
            <person name="del Rey F."/>
            <person name="Benito J."/>
            <person name="Dominguez A."/>
            <person name="Revuelta J.L."/>
            <person name="Moreno S."/>
            <person name="Armstrong J."/>
            <person name="Forsburg S.L."/>
            <person name="Cerutti L."/>
            <person name="Lowe T."/>
            <person name="McCombie W.R."/>
            <person name="Paulsen I."/>
            <person name="Potashkin J."/>
            <person name="Shpakovski G.V."/>
            <person name="Ussery D."/>
            <person name="Barrell B.G."/>
            <person name="Nurse P."/>
        </authorList>
    </citation>
    <scope>NUCLEOTIDE SEQUENCE [LARGE SCALE GENOMIC DNA]</scope>
    <source>
        <strain>972 / ATCC 24843</strain>
    </source>
</reference>
<reference key="2">
    <citation type="journal article" date="2006" name="Nat. Biotechnol.">
        <title>ORFeome cloning and global analysis of protein localization in the fission yeast Schizosaccharomyces pombe.</title>
        <authorList>
            <person name="Matsuyama A."/>
            <person name="Arai R."/>
            <person name="Yashiroda Y."/>
            <person name="Shirai A."/>
            <person name="Kamata A."/>
            <person name="Sekido S."/>
            <person name="Kobayashi Y."/>
            <person name="Hashimoto A."/>
            <person name="Hamamoto M."/>
            <person name="Hiraoka Y."/>
            <person name="Horinouchi S."/>
            <person name="Yoshida M."/>
        </authorList>
    </citation>
    <scope>SUBCELLULAR LOCATION [LARGE SCALE ANALYSIS]</scope>
</reference>
<reference key="3">
    <citation type="journal article" date="2019" name="Biochem. Biophys. Res. Commun.">
        <title>Schizosaccharomyces pombe contains separate CC- and A-adding tRNA nucleotidyltransferases.</title>
        <authorList>
            <person name="Reid N.E."/>
            <person name="Ngou J.S."/>
            <person name="Joyce P.B.M."/>
        </authorList>
    </citation>
    <scope>FUNCTION</scope>
    <scope>DOMAIN</scope>
    <scope>CATALYTIC ACTIVITY</scope>
</reference>
<reference key="4">
    <citation type="journal article" date="2019" name="Nat. Methods">
        <title>Unbiased screen of RNA tailing activities reveals a poly(UG) polymerase.</title>
        <authorList>
            <person name="Preston M.A."/>
            <person name="Porter D.F."/>
            <person name="Chen F."/>
            <person name="Buter N."/>
            <person name="Lapointe C.P."/>
            <person name="Keles S."/>
            <person name="Kimble J."/>
            <person name="Wickens M."/>
        </authorList>
    </citation>
    <scope>FUNCTION</scope>
</reference>